<dbReference type="EC" id="2.7.2.11" evidence="1"/>
<dbReference type="EMBL" id="CP000941">
    <property type="protein sequence ID" value="ACA11341.1"/>
    <property type="molecule type" value="Genomic_DNA"/>
</dbReference>
<dbReference type="RefSeq" id="WP_012337614.1">
    <property type="nucleotide sequence ID" value="NC_010513.1"/>
</dbReference>
<dbReference type="SMR" id="B0U207"/>
<dbReference type="KEGG" id="xfm:Xfasm12_0320"/>
<dbReference type="HOGENOM" id="CLU_025400_2_0_6"/>
<dbReference type="UniPathway" id="UPA00098">
    <property type="reaction ID" value="UER00359"/>
</dbReference>
<dbReference type="GO" id="GO:0005829">
    <property type="term" value="C:cytosol"/>
    <property type="evidence" value="ECO:0007669"/>
    <property type="project" value="TreeGrafter"/>
</dbReference>
<dbReference type="GO" id="GO:0005524">
    <property type="term" value="F:ATP binding"/>
    <property type="evidence" value="ECO:0007669"/>
    <property type="project" value="UniProtKB-KW"/>
</dbReference>
<dbReference type="GO" id="GO:0004349">
    <property type="term" value="F:glutamate 5-kinase activity"/>
    <property type="evidence" value="ECO:0007669"/>
    <property type="project" value="UniProtKB-UniRule"/>
</dbReference>
<dbReference type="GO" id="GO:0003723">
    <property type="term" value="F:RNA binding"/>
    <property type="evidence" value="ECO:0007669"/>
    <property type="project" value="InterPro"/>
</dbReference>
<dbReference type="GO" id="GO:0055129">
    <property type="term" value="P:L-proline biosynthetic process"/>
    <property type="evidence" value="ECO:0007669"/>
    <property type="project" value="UniProtKB-UniRule"/>
</dbReference>
<dbReference type="CDD" id="cd04242">
    <property type="entry name" value="AAK_G5K_ProB"/>
    <property type="match status" value="1"/>
</dbReference>
<dbReference type="CDD" id="cd21157">
    <property type="entry name" value="PUA_G5K"/>
    <property type="match status" value="1"/>
</dbReference>
<dbReference type="FunFam" id="2.30.130.10:FF:000007">
    <property type="entry name" value="Glutamate 5-kinase"/>
    <property type="match status" value="1"/>
</dbReference>
<dbReference type="FunFam" id="3.40.1160.10:FF:000018">
    <property type="entry name" value="Glutamate 5-kinase"/>
    <property type="match status" value="1"/>
</dbReference>
<dbReference type="Gene3D" id="3.40.1160.10">
    <property type="entry name" value="Acetylglutamate kinase-like"/>
    <property type="match status" value="1"/>
</dbReference>
<dbReference type="Gene3D" id="2.30.130.10">
    <property type="entry name" value="PUA domain"/>
    <property type="match status" value="1"/>
</dbReference>
<dbReference type="HAMAP" id="MF_00456">
    <property type="entry name" value="ProB"/>
    <property type="match status" value="1"/>
</dbReference>
<dbReference type="InterPro" id="IPR036393">
    <property type="entry name" value="AceGlu_kinase-like_sf"/>
</dbReference>
<dbReference type="InterPro" id="IPR001048">
    <property type="entry name" value="Asp/Glu/Uridylate_kinase"/>
</dbReference>
<dbReference type="InterPro" id="IPR041739">
    <property type="entry name" value="G5K_ProB"/>
</dbReference>
<dbReference type="InterPro" id="IPR001057">
    <property type="entry name" value="Glu/AcGlu_kinase"/>
</dbReference>
<dbReference type="InterPro" id="IPR011529">
    <property type="entry name" value="Glu_5kinase"/>
</dbReference>
<dbReference type="InterPro" id="IPR005715">
    <property type="entry name" value="Glu_5kinase/COase_Synthase"/>
</dbReference>
<dbReference type="InterPro" id="IPR019797">
    <property type="entry name" value="Glutamate_5-kinase_CS"/>
</dbReference>
<dbReference type="InterPro" id="IPR002478">
    <property type="entry name" value="PUA"/>
</dbReference>
<dbReference type="InterPro" id="IPR015947">
    <property type="entry name" value="PUA-like_sf"/>
</dbReference>
<dbReference type="InterPro" id="IPR036974">
    <property type="entry name" value="PUA_sf"/>
</dbReference>
<dbReference type="NCBIfam" id="TIGR01027">
    <property type="entry name" value="proB"/>
    <property type="match status" value="1"/>
</dbReference>
<dbReference type="PANTHER" id="PTHR43654">
    <property type="entry name" value="GLUTAMATE 5-KINASE"/>
    <property type="match status" value="1"/>
</dbReference>
<dbReference type="PANTHER" id="PTHR43654:SF1">
    <property type="entry name" value="ISOPENTENYL PHOSPHATE KINASE"/>
    <property type="match status" value="1"/>
</dbReference>
<dbReference type="Pfam" id="PF00696">
    <property type="entry name" value="AA_kinase"/>
    <property type="match status" value="1"/>
</dbReference>
<dbReference type="Pfam" id="PF01472">
    <property type="entry name" value="PUA"/>
    <property type="match status" value="1"/>
</dbReference>
<dbReference type="PIRSF" id="PIRSF000729">
    <property type="entry name" value="GK"/>
    <property type="match status" value="1"/>
</dbReference>
<dbReference type="PRINTS" id="PR00474">
    <property type="entry name" value="GLU5KINASE"/>
</dbReference>
<dbReference type="SMART" id="SM00359">
    <property type="entry name" value="PUA"/>
    <property type="match status" value="1"/>
</dbReference>
<dbReference type="SUPFAM" id="SSF53633">
    <property type="entry name" value="Carbamate kinase-like"/>
    <property type="match status" value="1"/>
</dbReference>
<dbReference type="SUPFAM" id="SSF88697">
    <property type="entry name" value="PUA domain-like"/>
    <property type="match status" value="1"/>
</dbReference>
<dbReference type="PROSITE" id="PS00902">
    <property type="entry name" value="GLUTAMATE_5_KINASE"/>
    <property type="match status" value="1"/>
</dbReference>
<dbReference type="PROSITE" id="PS50890">
    <property type="entry name" value="PUA"/>
    <property type="match status" value="1"/>
</dbReference>
<comment type="function">
    <text evidence="1">Catalyzes the transfer of a phosphate group to glutamate to form L-glutamate 5-phosphate.</text>
</comment>
<comment type="catalytic activity">
    <reaction evidence="1">
        <text>L-glutamate + ATP = L-glutamyl 5-phosphate + ADP</text>
        <dbReference type="Rhea" id="RHEA:14877"/>
        <dbReference type="ChEBI" id="CHEBI:29985"/>
        <dbReference type="ChEBI" id="CHEBI:30616"/>
        <dbReference type="ChEBI" id="CHEBI:58274"/>
        <dbReference type="ChEBI" id="CHEBI:456216"/>
        <dbReference type="EC" id="2.7.2.11"/>
    </reaction>
</comment>
<comment type="pathway">
    <text evidence="1">Amino-acid biosynthesis; L-proline biosynthesis; L-glutamate 5-semialdehyde from L-glutamate: step 1/2.</text>
</comment>
<comment type="subcellular location">
    <subcellularLocation>
        <location evidence="1">Cytoplasm</location>
    </subcellularLocation>
</comment>
<comment type="similarity">
    <text evidence="1">Belongs to the glutamate 5-kinase family.</text>
</comment>
<reference key="1">
    <citation type="journal article" date="2010" name="J. Bacteriol.">
        <title>Whole genome sequences of two Xylella fastidiosa strains (M12 and M23) causing almond leaf scorch disease in California.</title>
        <authorList>
            <person name="Chen J."/>
            <person name="Xie G."/>
            <person name="Han S."/>
            <person name="Chertkov O."/>
            <person name="Sims D."/>
            <person name="Civerolo E.L."/>
        </authorList>
    </citation>
    <scope>NUCLEOTIDE SEQUENCE [LARGE SCALE GENOMIC DNA]</scope>
    <source>
        <strain>M12</strain>
    </source>
</reference>
<protein>
    <recommendedName>
        <fullName evidence="1">Glutamate 5-kinase</fullName>
        <ecNumber evidence="1">2.7.2.11</ecNumber>
    </recommendedName>
    <alternativeName>
        <fullName evidence="1">Gamma-glutamyl kinase</fullName>
        <shortName evidence="1">GK</shortName>
    </alternativeName>
</protein>
<organism>
    <name type="scientific">Xylella fastidiosa (strain M12)</name>
    <dbReference type="NCBI Taxonomy" id="405440"/>
    <lineage>
        <taxon>Bacteria</taxon>
        <taxon>Pseudomonadati</taxon>
        <taxon>Pseudomonadota</taxon>
        <taxon>Gammaproteobacteria</taxon>
        <taxon>Lysobacterales</taxon>
        <taxon>Lysobacteraceae</taxon>
        <taxon>Xylella</taxon>
    </lineage>
</organism>
<sequence>MTGIPPPSRFPEQPIPPWRRAVLKVGSSLLAADGGGLSPRFALDLAHFVSANITAGRQLVIVSSGAVAAGRALIPPLPESGGALAARQALAALGQAQLIALWQRFFDRPVAQVLLTHDDLRNRRRYLNARATLRELLHLGTLPVVNENDTVSVDELKLGDNDNLAAIVAALIDAQALFIATDIDGLYTTDPRHHPDAQPLHEVRTLTPEHLAMAGDSSSTGGTGGMRTKLEAALKAGAAGIDTYLFNGRSSDVVRGLAQHRLRGTRIHPTCTPIAARKYWLRHAPVEPGAILIDAGAAAALAQQGASLLPGGVLSAEGDFRRGDMIQITTRSPDHPSHPLARGLVQYSAADVRRIAGCHSRDIQTLLGYTYGDTIVHRDDLVLL</sequence>
<name>PROB_XYLFM</name>
<proteinExistence type="inferred from homology"/>
<gene>
    <name evidence="1" type="primary">proB</name>
    <name type="ordered locus">Xfasm12_0320</name>
</gene>
<accession>B0U207</accession>
<keyword id="KW-0028">Amino-acid biosynthesis</keyword>
<keyword id="KW-0067">ATP-binding</keyword>
<keyword id="KW-0963">Cytoplasm</keyword>
<keyword id="KW-0418">Kinase</keyword>
<keyword id="KW-0547">Nucleotide-binding</keyword>
<keyword id="KW-0641">Proline biosynthesis</keyword>
<keyword id="KW-0808">Transferase</keyword>
<evidence type="ECO:0000255" key="1">
    <source>
        <dbReference type="HAMAP-Rule" id="MF_00456"/>
    </source>
</evidence>
<feature type="chain" id="PRO_1000193716" description="Glutamate 5-kinase">
    <location>
        <begin position="1"/>
        <end position="384"/>
    </location>
</feature>
<feature type="domain" description="PUA" evidence="1">
    <location>
        <begin position="288"/>
        <end position="370"/>
    </location>
</feature>
<feature type="binding site" evidence="1">
    <location>
        <position position="24"/>
    </location>
    <ligand>
        <name>ATP</name>
        <dbReference type="ChEBI" id="CHEBI:30616"/>
    </ligand>
</feature>
<feature type="binding site" evidence="1">
    <location>
        <position position="64"/>
    </location>
    <ligand>
        <name>substrate</name>
    </ligand>
</feature>
<feature type="binding site" evidence="1">
    <location>
        <position position="149"/>
    </location>
    <ligand>
        <name>substrate</name>
    </ligand>
</feature>
<feature type="binding site" evidence="1">
    <location>
        <position position="161"/>
    </location>
    <ligand>
        <name>substrate</name>
    </ligand>
</feature>
<feature type="binding site" evidence="1">
    <location>
        <begin position="181"/>
        <end position="182"/>
    </location>
    <ligand>
        <name>ATP</name>
        <dbReference type="ChEBI" id="CHEBI:30616"/>
    </ligand>
</feature>
<feature type="binding site" evidence="1">
    <location>
        <begin position="223"/>
        <end position="229"/>
    </location>
    <ligand>
        <name>ATP</name>
        <dbReference type="ChEBI" id="CHEBI:30616"/>
    </ligand>
</feature>